<protein>
    <recommendedName>
        <fullName>Amino-acid acetyltransferase</fullName>
        <ecNumber>2.3.1.1</ecNumber>
    </recommendedName>
    <alternativeName>
        <fullName>N-acetylglutamate synthase</fullName>
        <shortName>AGS</shortName>
        <shortName>NAGS</shortName>
    </alternativeName>
</protein>
<feature type="chain" id="PRO_0000186795" description="Amino-acid acetyltransferase">
    <location>
        <begin position="1"/>
        <end position="436"/>
    </location>
</feature>
<feature type="domain" description="N-acetyltransferase">
    <location>
        <begin position="287"/>
        <end position="436"/>
    </location>
</feature>
<keyword id="KW-0012">Acyltransferase</keyword>
<keyword id="KW-0028">Amino-acid biosynthesis</keyword>
<keyword id="KW-0055">Arginine biosynthesis</keyword>
<keyword id="KW-0963">Cytoplasm</keyword>
<keyword id="KW-1185">Reference proteome</keyword>
<keyword id="KW-0808">Transferase</keyword>
<organism>
    <name type="scientific">Neisseria meningitidis serogroup B (strain ATCC BAA-335 / MC58)</name>
    <dbReference type="NCBI Taxonomy" id="122586"/>
    <lineage>
        <taxon>Bacteria</taxon>
        <taxon>Pseudomonadati</taxon>
        <taxon>Pseudomonadota</taxon>
        <taxon>Betaproteobacteria</taxon>
        <taxon>Neisseriales</taxon>
        <taxon>Neisseriaceae</taxon>
        <taxon>Neisseria</taxon>
    </lineage>
</organism>
<dbReference type="EC" id="2.3.1.1"/>
<dbReference type="EMBL" id="AE002098">
    <property type="protein sequence ID" value="AAF42210.1"/>
    <property type="molecule type" value="Genomic_DNA"/>
</dbReference>
<dbReference type="PIR" id="B81033">
    <property type="entry name" value="B81033"/>
</dbReference>
<dbReference type="RefSeq" id="NP_274872.1">
    <property type="nucleotide sequence ID" value="NC_003112.2"/>
</dbReference>
<dbReference type="RefSeq" id="WP_002217983.1">
    <property type="nucleotide sequence ID" value="NC_003112.2"/>
</dbReference>
<dbReference type="SMR" id="Q9JXU9"/>
<dbReference type="FunCoup" id="Q9JXU9">
    <property type="interactions" value="121"/>
</dbReference>
<dbReference type="STRING" id="122586.NMB1876"/>
<dbReference type="PaxDb" id="122586-NMB1876"/>
<dbReference type="KEGG" id="nme:NMB1876"/>
<dbReference type="PATRIC" id="fig|122586.8.peg.2397"/>
<dbReference type="HOGENOM" id="CLU_024773_0_0_4"/>
<dbReference type="InParanoid" id="Q9JXU9"/>
<dbReference type="OrthoDB" id="9802238at2"/>
<dbReference type="UniPathway" id="UPA00068">
    <property type="reaction ID" value="UER00106"/>
</dbReference>
<dbReference type="Proteomes" id="UP000000425">
    <property type="component" value="Chromosome"/>
</dbReference>
<dbReference type="GO" id="GO:0005737">
    <property type="term" value="C:cytoplasm"/>
    <property type="evidence" value="ECO:0007669"/>
    <property type="project" value="UniProtKB-SubCell"/>
</dbReference>
<dbReference type="GO" id="GO:0004042">
    <property type="term" value="F:L-glutamate N-acetyltransferase activity"/>
    <property type="evidence" value="ECO:0007669"/>
    <property type="project" value="UniProtKB-UniRule"/>
</dbReference>
<dbReference type="GO" id="GO:0006526">
    <property type="term" value="P:L-arginine biosynthetic process"/>
    <property type="evidence" value="ECO:0007669"/>
    <property type="project" value="UniProtKB-UniRule"/>
</dbReference>
<dbReference type="CDD" id="cd04237">
    <property type="entry name" value="AAK_NAGS-ABP"/>
    <property type="match status" value="1"/>
</dbReference>
<dbReference type="CDD" id="cd04301">
    <property type="entry name" value="NAT_SF"/>
    <property type="match status" value="1"/>
</dbReference>
<dbReference type="Gene3D" id="3.40.630.30">
    <property type="match status" value="1"/>
</dbReference>
<dbReference type="Gene3D" id="3.40.1160.10">
    <property type="entry name" value="Acetylglutamate kinase-like"/>
    <property type="match status" value="1"/>
</dbReference>
<dbReference type="HAMAP" id="MF_01105">
    <property type="entry name" value="N_acetyl_glu_synth"/>
    <property type="match status" value="1"/>
</dbReference>
<dbReference type="InterPro" id="IPR036393">
    <property type="entry name" value="AceGlu_kinase-like_sf"/>
</dbReference>
<dbReference type="InterPro" id="IPR016181">
    <property type="entry name" value="Acyl_CoA_acyltransferase"/>
</dbReference>
<dbReference type="InterPro" id="IPR001048">
    <property type="entry name" value="Asp/Glu/Uridylate_kinase"/>
</dbReference>
<dbReference type="InterPro" id="IPR000182">
    <property type="entry name" value="GNAT_dom"/>
</dbReference>
<dbReference type="InterPro" id="IPR033719">
    <property type="entry name" value="NAGS_kin"/>
</dbReference>
<dbReference type="InterPro" id="IPR010167">
    <property type="entry name" value="NH2A_AcTrfase"/>
</dbReference>
<dbReference type="NCBIfam" id="TIGR01890">
    <property type="entry name" value="N-Ac-Glu-synth"/>
    <property type="match status" value="1"/>
</dbReference>
<dbReference type="NCBIfam" id="NF003641">
    <property type="entry name" value="PRK05279.1"/>
    <property type="match status" value="1"/>
</dbReference>
<dbReference type="PANTHER" id="PTHR30602">
    <property type="entry name" value="AMINO-ACID ACETYLTRANSFERASE"/>
    <property type="match status" value="1"/>
</dbReference>
<dbReference type="PANTHER" id="PTHR30602:SF12">
    <property type="entry name" value="AMINO-ACID ACETYLTRANSFERASE NAGS1, CHLOROPLASTIC-RELATED"/>
    <property type="match status" value="1"/>
</dbReference>
<dbReference type="Pfam" id="PF00696">
    <property type="entry name" value="AA_kinase"/>
    <property type="match status" value="1"/>
</dbReference>
<dbReference type="Pfam" id="PF00583">
    <property type="entry name" value="Acetyltransf_1"/>
    <property type="match status" value="1"/>
</dbReference>
<dbReference type="PIRSF" id="PIRSF000423">
    <property type="entry name" value="ArgA"/>
    <property type="match status" value="1"/>
</dbReference>
<dbReference type="SUPFAM" id="SSF55729">
    <property type="entry name" value="Acyl-CoA N-acyltransferases (Nat)"/>
    <property type="match status" value="1"/>
</dbReference>
<dbReference type="SUPFAM" id="SSF53633">
    <property type="entry name" value="Carbamate kinase-like"/>
    <property type="match status" value="1"/>
</dbReference>
<dbReference type="PROSITE" id="PS51186">
    <property type="entry name" value="GNAT"/>
    <property type="match status" value="1"/>
</dbReference>
<comment type="catalytic activity">
    <reaction>
        <text>L-glutamate + acetyl-CoA = N-acetyl-L-glutamate + CoA + H(+)</text>
        <dbReference type="Rhea" id="RHEA:24292"/>
        <dbReference type="ChEBI" id="CHEBI:15378"/>
        <dbReference type="ChEBI" id="CHEBI:29985"/>
        <dbReference type="ChEBI" id="CHEBI:44337"/>
        <dbReference type="ChEBI" id="CHEBI:57287"/>
        <dbReference type="ChEBI" id="CHEBI:57288"/>
        <dbReference type="EC" id="2.3.1.1"/>
    </reaction>
</comment>
<comment type="pathway">
    <text>Amino-acid biosynthesis; L-arginine biosynthesis; N(2)-acetyl-L-ornithine from L-glutamate: step 1/4.</text>
</comment>
<comment type="subcellular location">
    <subcellularLocation>
        <location evidence="1">Cytoplasm</location>
    </subcellularLocation>
</comment>
<comment type="miscellaneous">
    <text>In bacteria which possess the bifunctional enzyme ornithine acetyltransferase/N-acetylglutamate synthase (ArgJ), ArgA fulfills an anaplerotic role.</text>
</comment>
<comment type="similarity">
    <text evidence="2">Belongs to the acetyltransferase family. ArgA subfamily.</text>
</comment>
<evidence type="ECO:0000250" key="1"/>
<evidence type="ECO:0000305" key="2"/>
<reference key="1">
    <citation type="journal article" date="2000" name="Science">
        <title>Complete genome sequence of Neisseria meningitidis serogroup B strain MC58.</title>
        <authorList>
            <person name="Tettelin H."/>
            <person name="Saunders N.J."/>
            <person name="Heidelberg J.F."/>
            <person name="Jeffries A.C."/>
            <person name="Nelson K.E."/>
            <person name="Eisen J.A."/>
            <person name="Ketchum K.A."/>
            <person name="Hood D.W."/>
            <person name="Peden J.F."/>
            <person name="Dodson R.J."/>
            <person name="Nelson W.C."/>
            <person name="Gwinn M.L."/>
            <person name="DeBoy R.T."/>
            <person name="Peterson J.D."/>
            <person name="Hickey E.K."/>
            <person name="Haft D.H."/>
            <person name="Salzberg S.L."/>
            <person name="White O."/>
            <person name="Fleischmann R.D."/>
            <person name="Dougherty B.A."/>
            <person name="Mason T.M."/>
            <person name="Ciecko A."/>
            <person name="Parksey D.S."/>
            <person name="Blair E."/>
            <person name="Cittone H."/>
            <person name="Clark E.B."/>
            <person name="Cotton M.D."/>
            <person name="Utterback T.R."/>
            <person name="Khouri H.M."/>
            <person name="Qin H."/>
            <person name="Vamathevan J.J."/>
            <person name="Gill J."/>
            <person name="Scarlato V."/>
            <person name="Masignani V."/>
            <person name="Pizza M."/>
            <person name="Grandi G."/>
            <person name="Sun L."/>
            <person name="Smith H.O."/>
            <person name="Fraser C.M."/>
            <person name="Moxon E.R."/>
            <person name="Rappuoli R."/>
            <person name="Venter J.C."/>
        </authorList>
    </citation>
    <scope>NUCLEOTIDE SEQUENCE [LARGE SCALE GENOMIC DNA]</scope>
    <source>
        <strain>ATCC BAA-335 / MC58</strain>
    </source>
</reference>
<gene>
    <name type="primary">argA</name>
    <name type="ordered locus">NMB1876</name>
</gene>
<sequence>MSAPDLFVAHFREAVPYIRQMRGKTLVAGIDDRLLEGDTLNKLAADIGLLSQLGIRLVLIHGARHFLDRHAAAQGRTPHYCRGLRVTDETSLEQAQQFAGTVRSRFEAALCGSVSGFARAPSVPLVSGNFLTARPIGVIDGTDMEYAGVIRKTDTAALRFQLDAGNIVWLPPLGHSYSGKTFYLDMLQTAASAAVSLQAEKLVYLTLSDGISRPDGTLAETLSAQEAQSLAEHAGGETRRLISSAVAALEGGVHRVQILNGAADGSLLQELFTRNGIGTSIAKEAFVSIRQAHSGDIPHIAALIRPLEEQGILLHRSREYLENHISEFSILEHDGNLYGCAALKTFAEADCGEIACLAVSPQAQDGGYGERLLAHIIDKARGIGISRLFALSTNTGEWFAERGFQTASEDELPETRRKDYRSNGRNSHILVRRLHR</sequence>
<proteinExistence type="inferred from homology"/>
<name>ARGA_NEIMB</name>
<accession>Q9JXU9</accession>